<comment type="function">
    <text evidence="5">Catalyzes the formation of S-adenosylmethionine from methionine and ATP. The reaction comprises two steps that are both catalyzed by the same enzyme: formation of S-adenosylmethionine (AdoMet) and triphosphate, and subsequent hydrolysis of the triphosphate.</text>
</comment>
<comment type="catalytic activity">
    <reaction evidence="5">
        <text>L-methionine + ATP + H2O = S-adenosyl-L-methionine + phosphate + diphosphate</text>
        <dbReference type="Rhea" id="RHEA:21080"/>
        <dbReference type="ChEBI" id="CHEBI:15377"/>
        <dbReference type="ChEBI" id="CHEBI:30616"/>
        <dbReference type="ChEBI" id="CHEBI:33019"/>
        <dbReference type="ChEBI" id="CHEBI:43474"/>
        <dbReference type="ChEBI" id="CHEBI:57844"/>
        <dbReference type="ChEBI" id="CHEBI:59789"/>
        <dbReference type="EC" id="2.5.1.6"/>
    </reaction>
</comment>
<comment type="cofactor">
    <cofactor evidence="5">
        <name>Mn(2+)</name>
        <dbReference type="ChEBI" id="CHEBI:29035"/>
    </cofactor>
    <cofactor evidence="5">
        <name>Mg(2+)</name>
        <dbReference type="ChEBI" id="CHEBI:18420"/>
    </cofactor>
    <cofactor evidence="5">
        <name>Co(2+)</name>
        <dbReference type="ChEBI" id="CHEBI:48828"/>
    </cofactor>
    <text evidence="3 5">Binds 2 divalent ions per subunit. The metal ions interact primarily with the substrate (By similarity). Can utilize magnesium, manganese or cobalt (in vitro) (By similarity).</text>
</comment>
<comment type="cofactor">
    <cofactor evidence="5">
        <name>K(+)</name>
        <dbReference type="ChEBI" id="CHEBI:29103"/>
    </cofactor>
    <text evidence="3">Binds 1 potassium ion per subunit. The potassium ion interacts primarily with the substrate (By similarity).</text>
</comment>
<comment type="pathway">
    <text evidence="5">Amino-acid biosynthesis; S-adenosyl-L-methionine biosynthesis; S-adenosyl-L-methionine from L-methionine: step 1/1.</text>
</comment>
<comment type="subunit">
    <text evidence="1">Homotetramer.</text>
</comment>
<comment type="subcellular location">
    <subcellularLocation>
        <location evidence="1">Cytoplasm</location>
    </subcellularLocation>
</comment>
<comment type="tissue specificity">
    <text evidence="6">Mostly expressed in stems.</text>
</comment>
<comment type="induction">
    <text evidence="6">By salt stress, ABA, and mannitol in roots and leaves.</text>
</comment>
<comment type="similarity">
    <text evidence="7">Belongs to the AdoMet synthase family.</text>
</comment>
<dbReference type="EC" id="2.5.1.6" evidence="5"/>
<dbReference type="EMBL" id="Z24741">
    <property type="protein sequence ID" value="CAA80865.1"/>
    <property type="molecule type" value="mRNA"/>
</dbReference>
<dbReference type="PIR" id="S46538">
    <property type="entry name" value="S46538"/>
</dbReference>
<dbReference type="RefSeq" id="NP_001234425.1">
    <property type="nucleotide sequence ID" value="NM_001247496.3"/>
</dbReference>
<dbReference type="SMR" id="P43280"/>
<dbReference type="FunCoup" id="P43280">
    <property type="interactions" value="2654"/>
</dbReference>
<dbReference type="STRING" id="4081.P43280"/>
<dbReference type="PaxDb" id="4081-Solyc01g101060.2.1"/>
<dbReference type="GeneID" id="544155"/>
<dbReference type="KEGG" id="sly:544155"/>
<dbReference type="eggNOG" id="KOG1506">
    <property type="taxonomic scope" value="Eukaryota"/>
</dbReference>
<dbReference type="HOGENOM" id="CLU_041802_0_1_1"/>
<dbReference type="InParanoid" id="P43280"/>
<dbReference type="OrthoDB" id="5852090at2759"/>
<dbReference type="PhylomeDB" id="P43280"/>
<dbReference type="BRENDA" id="2.5.1.6">
    <property type="organism ID" value="3101"/>
</dbReference>
<dbReference type="UniPathway" id="UPA00315">
    <property type="reaction ID" value="UER00080"/>
</dbReference>
<dbReference type="Proteomes" id="UP000004994">
    <property type="component" value="Unplaced"/>
</dbReference>
<dbReference type="GO" id="GO:0005829">
    <property type="term" value="C:cytosol"/>
    <property type="evidence" value="ECO:0000318"/>
    <property type="project" value="GO_Central"/>
</dbReference>
<dbReference type="GO" id="GO:0005524">
    <property type="term" value="F:ATP binding"/>
    <property type="evidence" value="ECO:0007669"/>
    <property type="project" value="UniProtKB-KW"/>
</dbReference>
<dbReference type="GO" id="GO:0046872">
    <property type="term" value="F:metal ion binding"/>
    <property type="evidence" value="ECO:0007669"/>
    <property type="project" value="UniProtKB-KW"/>
</dbReference>
<dbReference type="GO" id="GO:0004478">
    <property type="term" value="F:methionine adenosyltransferase activity"/>
    <property type="evidence" value="ECO:0000318"/>
    <property type="project" value="GO_Central"/>
</dbReference>
<dbReference type="GO" id="GO:0006730">
    <property type="term" value="P:one-carbon metabolic process"/>
    <property type="evidence" value="ECO:0007669"/>
    <property type="project" value="UniProtKB-KW"/>
</dbReference>
<dbReference type="GO" id="GO:0006556">
    <property type="term" value="P:S-adenosylmethionine biosynthetic process"/>
    <property type="evidence" value="ECO:0000318"/>
    <property type="project" value="GO_Central"/>
</dbReference>
<dbReference type="CDD" id="cd18079">
    <property type="entry name" value="S-AdoMet_synt"/>
    <property type="match status" value="1"/>
</dbReference>
<dbReference type="FunFam" id="3.30.300.10:FF:000001">
    <property type="entry name" value="S-adenosylmethionine synthase"/>
    <property type="match status" value="1"/>
</dbReference>
<dbReference type="FunFam" id="3.30.300.10:FF:000003">
    <property type="entry name" value="S-adenosylmethionine synthase"/>
    <property type="match status" value="1"/>
</dbReference>
<dbReference type="FunFam" id="3.30.300.10:FF:000004">
    <property type="entry name" value="S-adenosylmethionine synthase"/>
    <property type="match status" value="1"/>
</dbReference>
<dbReference type="Gene3D" id="3.30.300.10">
    <property type="match status" value="3"/>
</dbReference>
<dbReference type="HAMAP" id="MF_00086">
    <property type="entry name" value="S_AdoMet_synth1"/>
    <property type="match status" value="1"/>
</dbReference>
<dbReference type="InterPro" id="IPR022631">
    <property type="entry name" value="ADOMET_SYNTHASE_CS"/>
</dbReference>
<dbReference type="InterPro" id="IPR022630">
    <property type="entry name" value="S-AdoMet_synt_C"/>
</dbReference>
<dbReference type="InterPro" id="IPR022629">
    <property type="entry name" value="S-AdoMet_synt_central"/>
</dbReference>
<dbReference type="InterPro" id="IPR022628">
    <property type="entry name" value="S-AdoMet_synt_N"/>
</dbReference>
<dbReference type="InterPro" id="IPR002133">
    <property type="entry name" value="S-AdoMet_synthetase"/>
</dbReference>
<dbReference type="InterPro" id="IPR022636">
    <property type="entry name" value="S-AdoMet_synthetase_sfam"/>
</dbReference>
<dbReference type="NCBIfam" id="TIGR01034">
    <property type="entry name" value="metK"/>
    <property type="match status" value="1"/>
</dbReference>
<dbReference type="PANTHER" id="PTHR11964">
    <property type="entry name" value="S-ADENOSYLMETHIONINE SYNTHETASE"/>
    <property type="match status" value="1"/>
</dbReference>
<dbReference type="Pfam" id="PF02773">
    <property type="entry name" value="S-AdoMet_synt_C"/>
    <property type="match status" value="1"/>
</dbReference>
<dbReference type="Pfam" id="PF02772">
    <property type="entry name" value="S-AdoMet_synt_M"/>
    <property type="match status" value="1"/>
</dbReference>
<dbReference type="Pfam" id="PF00438">
    <property type="entry name" value="S-AdoMet_synt_N"/>
    <property type="match status" value="1"/>
</dbReference>
<dbReference type="PIRSF" id="PIRSF000497">
    <property type="entry name" value="MAT"/>
    <property type="match status" value="1"/>
</dbReference>
<dbReference type="SUPFAM" id="SSF55973">
    <property type="entry name" value="S-adenosylmethionine synthetase"/>
    <property type="match status" value="3"/>
</dbReference>
<dbReference type="PROSITE" id="PS00376">
    <property type="entry name" value="ADOMET_SYNTHASE_1"/>
    <property type="match status" value="1"/>
</dbReference>
<dbReference type="PROSITE" id="PS00377">
    <property type="entry name" value="ADOMET_SYNTHASE_2"/>
    <property type="match status" value="1"/>
</dbReference>
<organism>
    <name type="scientific">Solanum lycopersicum</name>
    <name type="common">Tomato</name>
    <name type="synonym">Lycopersicon esculentum</name>
    <dbReference type="NCBI Taxonomy" id="4081"/>
    <lineage>
        <taxon>Eukaryota</taxon>
        <taxon>Viridiplantae</taxon>
        <taxon>Streptophyta</taxon>
        <taxon>Embryophyta</taxon>
        <taxon>Tracheophyta</taxon>
        <taxon>Spermatophyta</taxon>
        <taxon>Magnoliopsida</taxon>
        <taxon>eudicotyledons</taxon>
        <taxon>Gunneridae</taxon>
        <taxon>Pentapetalae</taxon>
        <taxon>asterids</taxon>
        <taxon>lamiids</taxon>
        <taxon>Solanales</taxon>
        <taxon>Solanaceae</taxon>
        <taxon>Solanoideae</taxon>
        <taxon>Solaneae</taxon>
        <taxon>Solanum</taxon>
        <taxon>Solanum subgen. Lycopersicon</taxon>
    </lineage>
</organism>
<accession>P43280</accession>
<proteinExistence type="evidence at transcript level"/>
<reference key="1">
    <citation type="journal article" date="1994" name="Plant Mol. Biol.">
        <title>Differential accumulation of S-adenosylmethionine synthetase transcripts in response to salt stress.</title>
        <authorList>
            <person name="Espartero J."/>
            <person name="Pintor-Toro J.A."/>
            <person name="Pardo J.M."/>
        </authorList>
    </citation>
    <scope>NUCLEOTIDE SEQUENCE [MRNA]</scope>
    <scope>TISSUE SPECIFICITY</scope>
    <scope>INDUCTION</scope>
    <source>
        <strain>cv. Rutgers</strain>
        <tissue>Seedling</tissue>
    </source>
</reference>
<evidence type="ECO:0000250" key="1"/>
<evidence type="ECO:0000250" key="2">
    <source>
        <dbReference type="UniProtKB" id="P0A817"/>
    </source>
</evidence>
<evidence type="ECO:0000250" key="3">
    <source>
        <dbReference type="UniProtKB" id="P13444"/>
    </source>
</evidence>
<evidence type="ECO:0000250" key="4">
    <source>
        <dbReference type="UniProtKB" id="Q00266"/>
    </source>
</evidence>
<evidence type="ECO:0000250" key="5">
    <source>
        <dbReference type="UniProtKB" id="Q96551"/>
    </source>
</evidence>
<evidence type="ECO:0000269" key="6">
    <source>
    </source>
</evidence>
<evidence type="ECO:0000305" key="7"/>
<feature type="chain" id="PRO_0000174464" description="S-adenosylmethionine synthase 1">
    <location>
        <begin position="1"/>
        <end position="393"/>
    </location>
</feature>
<feature type="binding site" evidence="3">
    <location>
        <position position="9"/>
    </location>
    <ligand>
        <name>Mg(2+)</name>
        <dbReference type="ChEBI" id="CHEBI:18420"/>
    </ligand>
</feature>
<feature type="binding site" description="in other chain" evidence="4">
    <location>
        <position position="15"/>
    </location>
    <ligand>
        <name>ATP</name>
        <dbReference type="ChEBI" id="CHEBI:30616"/>
        <note>ligand shared between two neighboring subunits</note>
    </ligand>
</feature>
<feature type="binding site" evidence="2">
    <location>
        <position position="43"/>
    </location>
    <ligand>
        <name>K(+)</name>
        <dbReference type="ChEBI" id="CHEBI:29103"/>
    </ligand>
</feature>
<feature type="binding site" description="in other chain" evidence="2">
    <location>
        <position position="56"/>
    </location>
    <ligand>
        <name>L-methionine</name>
        <dbReference type="ChEBI" id="CHEBI:57844"/>
        <note>ligand shared between two neighboring subunits</note>
    </ligand>
</feature>
<feature type="binding site" description="in other chain" evidence="2">
    <location>
        <position position="99"/>
    </location>
    <ligand>
        <name>L-methionine</name>
        <dbReference type="ChEBI" id="CHEBI:57844"/>
        <note>ligand shared between two neighboring subunits</note>
    </ligand>
</feature>
<feature type="binding site" description="in other chain" evidence="4">
    <location>
        <begin position="167"/>
        <end position="169"/>
    </location>
    <ligand>
        <name>ATP</name>
        <dbReference type="ChEBI" id="CHEBI:30616"/>
        <note>ligand shared between two neighboring subunits</note>
    </ligand>
</feature>
<feature type="binding site" description="in other chain" evidence="4">
    <location>
        <begin position="235"/>
        <end position="238"/>
    </location>
    <ligand>
        <name>ATP</name>
        <dbReference type="ChEBI" id="CHEBI:30616"/>
        <note>ligand shared between two neighboring subunits</note>
    </ligand>
</feature>
<feature type="binding site" description="in other chain" evidence="4">
    <location>
        <position position="246"/>
    </location>
    <ligand>
        <name>ATP</name>
        <dbReference type="ChEBI" id="CHEBI:30616"/>
        <note>ligand shared between two neighboring subunits</note>
    </ligand>
</feature>
<feature type="binding site" evidence="2">
    <location>
        <position position="246"/>
    </location>
    <ligand>
        <name>L-methionine</name>
        <dbReference type="ChEBI" id="CHEBI:57844"/>
        <note>ligand shared between two neighboring subunits</note>
    </ligand>
</feature>
<feature type="binding site" description="in other chain" evidence="2">
    <location>
        <begin position="252"/>
        <end position="253"/>
    </location>
    <ligand>
        <name>ATP</name>
        <dbReference type="ChEBI" id="CHEBI:30616"/>
        <note>ligand shared between two neighboring subunits</note>
    </ligand>
</feature>
<feature type="binding site" evidence="2">
    <location>
        <position position="269"/>
    </location>
    <ligand>
        <name>ATP</name>
        <dbReference type="ChEBI" id="CHEBI:30616"/>
        <note>ligand shared between two neighboring subunits</note>
    </ligand>
</feature>
<feature type="binding site" evidence="2">
    <location>
        <position position="273"/>
    </location>
    <ligand>
        <name>ATP</name>
        <dbReference type="ChEBI" id="CHEBI:30616"/>
        <note>ligand shared between two neighboring subunits</note>
    </ligand>
</feature>
<feature type="binding site" evidence="3">
    <location>
        <position position="277"/>
    </location>
    <ligand>
        <name>ATP</name>
        <dbReference type="ChEBI" id="CHEBI:30616"/>
        <note>ligand shared between two neighboring subunits</note>
    </ligand>
</feature>
<feature type="binding site" description="in other chain" evidence="2">
    <location>
        <position position="277"/>
    </location>
    <ligand>
        <name>L-methionine</name>
        <dbReference type="ChEBI" id="CHEBI:57844"/>
        <note>ligand shared between two neighboring subunits</note>
    </ligand>
</feature>
<keyword id="KW-0067">ATP-binding</keyword>
<keyword id="KW-0170">Cobalt</keyword>
<keyword id="KW-0963">Cytoplasm</keyword>
<keyword id="KW-0460">Magnesium</keyword>
<keyword id="KW-0479">Metal-binding</keyword>
<keyword id="KW-0547">Nucleotide-binding</keyword>
<keyword id="KW-0554">One-carbon metabolism</keyword>
<keyword id="KW-0630">Potassium</keyword>
<keyword id="KW-1185">Reference proteome</keyword>
<keyword id="KW-0808">Transferase</keyword>
<name>METK1_SOLLC</name>
<gene>
    <name type="primary">SAM1</name>
</gene>
<sequence>METFLFTSESVNEGHPDKLCDQISDAVLDACLEQDPESKVACETCTKTNLVMVFGEITTKAIVDYEKIVRDTCRNIGFVSDDVGLDADNCKVLVYIEQQSPDIAQGVHGHLTKRPEEIGAGDQGHMFGYATDETPELMPLSHVLATKLGARLTEVRKNGTCAWLRPDGKTQVTVEYSNDNGAMVPIRVHTVLISTQHDETVTNDEIARDLKEHVIKPVIPEKYLDENTIFHLNPSGRFVIGGPHGDAGLTGRKIIIDTYGGWGAHGGGAFSGKDPTKVDRSGAYIVRQAAKSIVASGLARRCIVQVSYAIGVPEPLSVFVDTYGTGKIPDREILKIVKENFDFRPGMMSINLDLKRGGNRRFLKTAAYGHFGRDDPDFTWEVVKPLKWEKPQD</sequence>
<protein>
    <recommendedName>
        <fullName>S-adenosylmethionine synthase 1</fullName>
        <shortName>AdoMet synthase 1</shortName>
        <ecNumber evidence="5">2.5.1.6</ecNumber>
    </recommendedName>
    <alternativeName>
        <fullName>Methionine adenosyltransferase 1</fullName>
        <shortName>MAT 1</shortName>
    </alternativeName>
</protein>